<keyword id="KW-1015">Disulfide bond</keyword>
<keyword id="KW-0325">Glycoprotein</keyword>
<keyword id="KW-0378">Hydrolase</keyword>
<keyword id="KW-0458">Lysosome</keyword>
<keyword id="KW-1185">Reference proteome</keyword>
<keyword id="KW-0732">Signal</keyword>
<gene>
    <name type="primary">Ppt1</name>
    <name type="ORF">CG12108</name>
</gene>
<evidence type="ECO:0000250" key="1"/>
<evidence type="ECO:0000255" key="2"/>
<evidence type="ECO:0000269" key="3">
    <source>
    </source>
</evidence>
<evidence type="ECO:0000269" key="4">
    <source>
    </source>
</evidence>
<evidence type="ECO:0000303" key="5">
    <source>
    </source>
</evidence>
<evidence type="ECO:0000305" key="6"/>
<evidence type="ECO:0000305" key="7">
    <source>
    </source>
</evidence>
<evidence type="ECO:0000305" key="8">
    <source>
    </source>
</evidence>
<reference key="1">
    <citation type="journal article" date="2003" name="Gene">
        <title>Characterization of Drosophila palmitoyl-protein thioesterase 1.</title>
        <authorList>
            <person name="Glaser R.L."/>
            <person name="Hickey A.J."/>
            <person name="Chotkowski H.L."/>
            <person name="Chu-LaGraff Q."/>
        </authorList>
    </citation>
    <scope>NUCLEOTIDE SEQUENCE [MRNA]</scope>
    <scope>TISSUE SPECIFICITY</scope>
    <scope>FUNCTION</scope>
</reference>
<reference key="2">
    <citation type="journal article" date="2000" name="Science">
        <title>The genome sequence of Drosophila melanogaster.</title>
        <authorList>
            <person name="Adams M.D."/>
            <person name="Celniker S.E."/>
            <person name="Holt R.A."/>
            <person name="Evans C.A."/>
            <person name="Gocayne J.D."/>
            <person name="Amanatides P.G."/>
            <person name="Scherer S.E."/>
            <person name="Li P.W."/>
            <person name="Hoskins R.A."/>
            <person name="Galle R.F."/>
            <person name="George R.A."/>
            <person name="Lewis S.E."/>
            <person name="Richards S."/>
            <person name="Ashburner M."/>
            <person name="Henderson S.N."/>
            <person name="Sutton G.G."/>
            <person name="Wortman J.R."/>
            <person name="Yandell M.D."/>
            <person name="Zhang Q."/>
            <person name="Chen L.X."/>
            <person name="Brandon R.C."/>
            <person name="Rogers Y.-H.C."/>
            <person name="Blazej R.G."/>
            <person name="Champe M."/>
            <person name="Pfeiffer B.D."/>
            <person name="Wan K.H."/>
            <person name="Doyle C."/>
            <person name="Baxter E.G."/>
            <person name="Helt G."/>
            <person name="Nelson C.R."/>
            <person name="Miklos G.L.G."/>
            <person name="Abril J.F."/>
            <person name="Agbayani A."/>
            <person name="An H.-J."/>
            <person name="Andrews-Pfannkoch C."/>
            <person name="Baldwin D."/>
            <person name="Ballew R.M."/>
            <person name="Basu A."/>
            <person name="Baxendale J."/>
            <person name="Bayraktaroglu L."/>
            <person name="Beasley E.M."/>
            <person name="Beeson K.Y."/>
            <person name="Benos P.V."/>
            <person name="Berman B.P."/>
            <person name="Bhandari D."/>
            <person name="Bolshakov S."/>
            <person name="Borkova D."/>
            <person name="Botchan M.R."/>
            <person name="Bouck J."/>
            <person name="Brokstein P."/>
            <person name="Brottier P."/>
            <person name="Burtis K.C."/>
            <person name="Busam D.A."/>
            <person name="Butler H."/>
            <person name="Cadieu E."/>
            <person name="Center A."/>
            <person name="Chandra I."/>
            <person name="Cherry J.M."/>
            <person name="Cawley S."/>
            <person name="Dahlke C."/>
            <person name="Davenport L.B."/>
            <person name="Davies P."/>
            <person name="de Pablos B."/>
            <person name="Delcher A."/>
            <person name="Deng Z."/>
            <person name="Mays A.D."/>
            <person name="Dew I."/>
            <person name="Dietz S.M."/>
            <person name="Dodson K."/>
            <person name="Doup L.E."/>
            <person name="Downes M."/>
            <person name="Dugan-Rocha S."/>
            <person name="Dunkov B.C."/>
            <person name="Dunn P."/>
            <person name="Durbin K.J."/>
            <person name="Evangelista C.C."/>
            <person name="Ferraz C."/>
            <person name="Ferriera S."/>
            <person name="Fleischmann W."/>
            <person name="Fosler C."/>
            <person name="Gabrielian A.E."/>
            <person name="Garg N.S."/>
            <person name="Gelbart W.M."/>
            <person name="Glasser K."/>
            <person name="Glodek A."/>
            <person name="Gong F."/>
            <person name="Gorrell J.H."/>
            <person name="Gu Z."/>
            <person name="Guan P."/>
            <person name="Harris M."/>
            <person name="Harris N.L."/>
            <person name="Harvey D.A."/>
            <person name="Heiman T.J."/>
            <person name="Hernandez J.R."/>
            <person name="Houck J."/>
            <person name="Hostin D."/>
            <person name="Houston K.A."/>
            <person name="Howland T.J."/>
            <person name="Wei M.-H."/>
            <person name="Ibegwam C."/>
            <person name="Jalali M."/>
            <person name="Kalush F."/>
            <person name="Karpen G.H."/>
            <person name="Ke Z."/>
            <person name="Kennison J.A."/>
            <person name="Ketchum K.A."/>
            <person name="Kimmel B.E."/>
            <person name="Kodira C.D."/>
            <person name="Kraft C.L."/>
            <person name="Kravitz S."/>
            <person name="Kulp D."/>
            <person name="Lai Z."/>
            <person name="Lasko P."/>
            <person name="Lei Y."/>
            <person name="Levitsky A.A."/>
            <person name="Li J.H."/>
            <person name="Li Z."/>
            <person name="Liang Y."/>
            <person name="Lin X."/>
            <person name="Liu X."/>
            <person name="Mattei B."/>
            <person name="McIntosh T.C."/>
            <person name="McLeod M.P."/>
            <person name="McPherson D."/>
            <person name="Merkulov G."/>
            <person name="Milshina N.V."/>
            <person name="Mobarry C."/>
            <person name="Morris J."/>
            <person name="Moshrefi A."/>
            <person name="Mount S.M."/>
            <person name="Moy M."/>
            <person name="Murphy B."/>
            <person name="Murphy L."/>
            <person name="Muzny D.M."/>
            <person name="Nelson D.L."/>
            <person name="Nelson D.R."/>
            <person name="Nelson K.A."/>
            <person name="Nixon K."/>
            <person name="Nusskern D.R."/>
            <person name="Pacleb J.M."/>
            <person name="Palazzolo M."/>
            <person name="Pittman G.S."/>
            <person name="Pan S."/>
            <person name="Pollard J."/>
            <person name="Puri V."/>
            <person name="Reese M.G."/>
            <person name="Reinert K."/>
            <person name="Remington K."/>
            <person name="Saunders R.D.C."/>
            <person name="Scheeler F."/>
            <person name="Shen H."/>
            <person name="Shue B.C."/>
            <person name="Siden-Kiamos I."/>
            <person name="Simpson M."/>
            <person name="Skupski M.P."/>
            <person name="Smith T.J."/>
            <person name="Spier E."/>
            <person name="Spradling A.C."/>
            <person name="Stapleton M."/>
            <person name="Strong R."/>
            <person name="Sun E."/>
            <person name="Svirskas R."/>
            <person name="Tector C."/>
            <person name="Turner R."/>
            <person name="Venter E."/>
            <person name="Wang A.H."/>
            <person name="Wang X."/>
            <person name="Wang Z.-Y."/>
            <person name="Wassarman D.A."/>
            <person name="Weinstock G.M."/>
            <person name="Weissenbach J."/>
            <person name="Williams S.M."/>
            <person name="Woodage T."/>
            <person name="Worley K.C."/>
            <person name="Wu D."/>
            <person name="Yang S."/>
            <person name="Yao Q.A."/>
            <person name="Ye J."/>
            <person name="Yeh R.-F."/>
            <person name="Zaveri J.S."/>
            <person name="Zhan M."/>
            <person name="Zhang G."/>
            <person name="Zhao Q."/>
            <person name="Zheng L."/>
            <person name="Zheng X.H."/>
            <person name="Zhong F.N."/>
            <person name="Zhong W."/>
            <person name="Zhou X."/>
            <person name="Zhu S.C."/>
            <person name="Zhu X."/>
            <person name="Smith H.O."/>
            <person name="Gibbs R.A."/>
            <person name="Myers E.W."/>
            <person name="Rubin G.M."/>
            <person name="Venter J.C."/>
        </authorList>
    </citation>
    <scope>NUCLEOTIDE SEQUENCE [LARGE SCALE GENOMIC DNA]</scope>
    <source>
        <strain>Berkeley</strain>
    </source>
</reference>
<reference key="3">
    <citation type="journal article" date="2002" name="Genome Biol.">
        <title>Annotation of the Drosophila melanogaster euchromatic genome: a systematic review.</title>
        <authorList>
            <person name="Misra S."/>
            <person name="Crosby M.A."/>
            <person name="Mungall C.J."/>
            <person name="Matthews B.B."/>
            <person name="Campbell K.S."/>
            <person name="Hradecky P."/>
            <person name="Huang Y."/>
            <person name="Kaminker J.S."/>
            <person name="Millburn G.H."/>
            <person name="Prochnik S.E."/>
            <person name="Smith C.D."/>
            <person name="Tupy J.L."/>
            <person name="Whitfield E.J."/>
            <person name="Bayraktaroglu L."/>
            <person name="Berman B.P."/>
            <person name="Bettencourt B.R."/>
            <person name="Celniker S.E."/>
            <person name="de Grey A.D.N.J."/>
            <person name="Drysdale R.A."/>
            <person name="Harris N.L."/>
            <person name="Richter J."/>
            <person name="Russo S."/>
            <person name="Schroeder A.J."/>
            <person name="Shu S.Q."/>
            <person name="Stapleton M."/>
            <person name="Yamada C."/>
            <person name="Ashburner M."/>
            <person name="Gelbart W.M."/>
            <person name="Rubin G.M."/>
            <person name="Lewis S.E."/>
        </authorList>
    </citation>
    <scope>GENOME REANNOTATION</scope>
    <source>
        <strain>Berkeley</strain>
    </source>
</reference>
<reference key="4">
    <citation type="journal article" date="2002" name="Genome Biol.">
        <title>A Drosophila full-length cDNA resource.</title>
        <authorList>
            <person name="Stapleton M."/>
            <person name="Carlson J.W."/>
            <person name="Brokstein P."/>
            <person name="Yu C."/>
            <person name="Champe M."/>
            <person name="George R.A."/>
            <person name="Guarin H."/>
            <person name="Kronmiller B."/>
            <person name="Pacleb J.M."/>
            <person name="Park S."/>
            <person name="Wan K.H."/>
            <person name="Rubin G.M."/>
            <person name="Celniker S.E."/>
        </authorList>
    </citation>
    <scope>NUCLEOTIDE SEQUENCE [LARGE SCALE MRNA]</scope>
    <source>
        <strain>Berkeley</strain>
        <tissue>Embryo</tissue>
        <tissue>Ovary</tissue>
    </source>
</reference>
<reference key="5">
    <citation type="journal article" date="2006" name="Genetics">
        <title>Palmitoyl-protein thioesterase 1 deficiency in Drosophila melanogaster causes accumulation of abnormal storage material and reduced life span.</title>
        <authorList>
            <person name="Hickey A.J."/>
            <person name="Chotkowski H.L."/>
            <person name="Singh N."/>
            <person name="Ault J.G."/>
            <person name="Korey C.A."/>
            <person name="MacDonald M.E."/>
            <person name="Glaser R.L."/>
        </authorList>
    </citation>
    <scope>FUNCTION</scope>
</reference>
<reference key="6">
    <citation type="journal article" date="2008" name="Fly">
        <title>The Drosophila protein palmitoylome: characterizing palmitoyl-thioesterases and DHHC palmitoyl-transferases.</title>
        <authorList>
            <person name="Bannan B.A."/>
            <person name="Van Etten J."/>
            <person name="Kohler J.A."/>
            <person name="Tsoi Y."/>
            <person name="Hansen N.M."/>
            <person name="Sigmon S."/>
            <person name="Fowler E."/>
            <person name="Buff H."/>
            <person name="Williams T.S."/>
            <person name="Ault J.G."/>
            <person name="Glaser R.L."/>
            <person name="Korey C.A."/>
        </authorList>
    </citation>
    <scope>SUBCELLULAR LOCATION</scope>
</reference>
<sequence length="314" mass="35780">MISICCSRFSCILFLLFLIFSLVLSYIWWSPTKGGTNPEVLPVVLWHGMGDTCCVPFSLGAIMNLIVEQTKGGYVRSLQIGGNVLIDWQSGFFIHPNEQVDYVCKQLLQDEHLAKGYHAIGFSQGGQFLRAVAERCPNPPMRNLITLGGQHQGIFGLPMCPTLTEKPCDYITRLLDNAAYAPEVQKALVQATYWHDPIMENKYRLGSTFLADINNELFINKFYIENLQKLKKFVMVQFLNDTIVQPKESQWFQYYTTGQNKVIQPFTESKVYQDLGLDKMHRQGQLVFLGVEGDHLAISKAWFIQNIVPLLLEK</sequence>
<dbReference type="EC" id="3.1.2.22" evidence="7"/>
<dbReference type="EMBL" id="AF513720">
    <property type="protein sequence ID" value="AAM49613.1"/>
    <property type="molecule type" value="mRNA"/>
</dbReference>
<dbReference type="EMBL" id="AE014298">
    <property type="protein sequence ID" value="AAF46403.2"/>
    <property type="molecule type" value="Genomic_DNA"/>
</dbReference>
<dbReference type="EMBL" id="AY118317">
    <property type="protein sequence ID" value="AAM48346.1"/>
    <property type="status" value="ALT_INIT"/>
    <property type="molecule type" value="mRNA"/>
</dbReference>
<dbReference type="EMBL" id="BT012481">
    <property type="protein sequence ID" value="AAS93752.1"/>
    <property type="molecule type" value="mRNA"/>
</dbReference>
<dbReference type="RefSeq" id="NP_001285024.1">
    <property type="nucleotide sequence ID" value="NM_001298095.2"/>
</dbReference>
<dbReference type="RefSeq" id="NP_727284.1">
    <property type="nucleotide sequence ID" value="NM_167166.4"/>
</dbReference>
<dbReference type="SMR" id="Q9W3C7"/>
<dbReference type="BioGRID" id="58264">
    <property type="interactions" value="36"/>
</dbReference>
<dbReference type="FunCoup" id="Q9W3C7">
    <property type="interactions" value="1680"/>
</dbReference>
<dbReference type="IntAct" id="Q9W3C7">
    <property type="interactions" value="9"/>
</dbReference>
<dbReference type="STRING" id="7227.FBpp0311872"/>
<dbReference type="ESTHER" id="drome-CG12108">
    <property type="family name" value="Palmitoyl-protein_thioesterase"/>
</dbReference>
<dbReference type="GlyCosmos" id="Q9W3C7">
    <property type="glycosylation" value="1 site, No reported glycans"/>
</dbReference>
<dbReference type="GlyGen" id="Q9W3C7">
    <property type="glycosylation" value="1 site"/>
</dbReference>
<dbReference type="PaxDb" id="7227-FBpp0071170"/>
<dbReference type="EnsemblMetazoa" id="FBtr0071225">
    <property type="protein sequence ID" value="FBpp0071170"/>
    <property type="gene ID" value="FBgn0030057"/>
</dbReference>
<dbReference type="EnsemblMetazoa" id="FBtr0345985">
    <property type="protein sequence ID" value="FBpp0311872"/>
    <property type="gene ID" value="FBgn0030057"/>
</dbReference>
<dbReference type="GeneID" id="31805"/>
<dbReference type="KEGG" id="dme:Dmel_CG12108"/>
<dbReference type="AGR" id="FB:FBgn0030057"/>
<dbReference type="CTD" id="5538"/>
<dbReference type="FlyBase" id="FBgn0030057">
    <property type="gene designation" value="Ppt1"/>
</dbReference>
<dbReference type="VEuPathDB" id="VectorBase:FBgn0030057"/>
<dbReference type="eggNOG" id="KOG2541">
    <property type="taxonomic scope" value="Eukaryota"/>
</dbReference>
<dbReference type="HOGENOM" id="CLU_050129_0_0_1"/>
<dbReference type="InParanoid" id="Q9W3C7"/>
<dbReference type="OMA" id="KFVMVMF"/>
<dbReference type="OrthoDB" id="10263094at2759"/>
<dbReference type="PhylomeDB" id="Q9W3C7"/>
<dbReference type="BRENDA" id="3.1.2.22">
    <property type="organism ID" value="1994"/>
</dbReference>
<dbReference type="Reactome" id="R-DME-75105">
    <property type="pathway name" value="Fatty acyl-CoA biosynthesis"/>
</dbReference>
<dbReference type="SignaLink" id="Q9W3C7"/>
<dbReference type="BioGRID-ORCS" id="31805">
    <property type="hits" value="0 hits in 1 CRISPR screen"/>
</dbReference>
<dbReference type="GenomeRNAi" id="31805"/>
<dbReference type="PRO" id="PR:Q9W3C7"/>
<dbReference type="Proteomes" id="UP000000803">
    <property type="component" value="Chromosome X"/>
</dbReference>
<dbReference type="Bgee" id="FBgn0030057">
    <property type="expression patterns" value="Expressed in eye disc (Drosophila) and 65 other cell types or tissues"/>
</dbReference>
<dbReference type="ExpressionAtlas" id="Q9W3C7">
    <property type="expression patterns" value="baseline and differential"/>
</dbReference>
<dbReference type="GO" id="GO:0005576">
    <property type="term" value="C:extracellular region"/>
    <property type="evidence" value="ECO:0000318"/>
    <property type="project" value="GO_Central"/>
</dbReference>
<dbReference type="GO" id="GO:0005764">
    <property type="term" value="C:lysosome"/>
    <property type="evidence" value="ECO:0000314"/>
    <property type="project" value="FlyBase"/>
</dbReference>
<dbReference type="GO" id="GO:0052816">
    <property type="term" value="F:long-chain fatty acyl-CoA hydrolase activity"/>
    <property type="evidence" value="ECO:0000318"/>
    <property type="project" value="GO_Central"/>
</dbReference>
<dbReference type="GO" id="GO:0008474">
    <property type="term" value="F:palmitoyl-(protein) hydrolase activity"/>
    <property type="evidence" value="ECO:0000314"/>
    <property type="project" value="UniProtKB"/>
</dbReference>
<dbReference type="GO" id="GO:0017171">
    <property type="term" value="F:serine hydrolase activity"/>
    <property type="evidence" value="ECO:0007005"/>
    <property type="project" value="FlyBase"/>
</dbReference>
<dbReference type="GO" id="GO:0008340">
    <property type="term" value="P:determination of adult lifespan"/>
    <property type="evidence" value="ECO:0000315"/>
    <property type="project" value="FlyBase"/>
</dbReference>
<dbReference type="GO" id="GO:0006897">
    <property type="term" value="P:endocytosis"/>
    <property type="evidence" value="ECO:0000314"/>
    <property type="project" value="FlyBase"/>
</dbReference>
<dbReference type="GO" id="GO:0007399">
    <property type="term" value="P:nervous system development"/>
    <property type="evidence" value="ECO:0000318"/>
    <property type="project" value="GO_Central"/>
</dbReference>
<dbReference type="GO" id="GO:0048665">
    <property type="term" value="P:neuron fate specification"/>
    <property type="evidence" value="ECO:0000315"/>
    <property type="project" value="FlyBase"/>
</dbReference>
<dbReference type="GO" id="GO:1900244">
    <property type="term" value="P:positive regulation of synaptic vesicle endocytosis"/>
    <property type="evidence" value="ECO:0000315"/>
    <property type="project" value="FlyBase"/>
</dbReference>
<dbReference type="GO" id="GO:1902667">
    <property type="term" value="P:regulation of axon guidance"/>
    <property type="evidence" value="ECO:0000315"/>
    <property type="project" value="FlyBase"/>
</dbReference>
<dbReference type="FunFam" id="3.40.50.1820:FF:000107">
    <property type="entry name" value="Palmitoyl-protein thioesterase 1"/>
    <property type="match status" value="1"/>
</dbReference>
<dbReference type="Gene3D" id="3.40.50.1820">
    <property type="entry name" value="alpha/beta hydrolase"/>
    <property type="match status" value="1"/>
</dbReference>
<dbReference type="InterPro" id="IPR029058">
    <property type="entry name" value="AB_hydrolase_fold"/>
</dbReference>
<dbReference type="InterPro" id="IPR002472">
    <property type="entry name" value="Palm_thioest"/>
</dbReference>
<dbReference type="PANTHER" id="PTHR11247:SF8">
    <property type="entry name" value="PALMITOYL-PROTEIN THIOESTERASE 1"/>
    <property type="match status" value="1"/>
</dbReference>
<dbReference type="PANTHER" id="PTHR11247">
    <property type="entry name" value="PALMITOYL-PROTEIN THIOESTERASE/DOLICHYLDIPHOSPHATASE 1"/>
    <property type="match status" value="1"/>
</dbReference>
<dbReference type="Pfam" id="PF02089">
    <property type="entry name" value="Palm_thioest"/>
    <property type="match status" value="1"/>
</dbReference>
<dbReference type="PRINTS" id="PR00414">
    <property type="entry name" value="PPTHIESTRASE"/>
</dbReference>
<dbReference type="SUPFAM" id="SSF53474">
    <property type="entry name" value="alpha/beta-Hydrolases"/>
    <property type="match status" value="1"/>
</dbReference>
<organism>
    <name type="scientific">Drosophila melanogaster</name>
    <name type="common">Fruit fly</name>
    <dbReference type="NCBI Taxonomy" id="7227"/>
    <lineage>
        <taxon>Eukaryota</taxon>
        <taxon>Metazoa</taxon>
        <taxon>Ecdysozoa</taxon>
        <taxon>Arthropoda</taxon>
        <taxon>Hexapoda</taxon>
        <taxon>Insecta</taxon>
        <taxon>Pterygota</taxon>
        <taxon>Neoptera</taxon>
        <taxon>Endopterygota</taxon>
        <taxon>Diptera</taxon>
        <taxon>Brachycera</taxon>
        <taxon>Muscomorpha</taxon>
        <taxon>Ephydroidea</taxon>
        <taxon>Drosophilidae</taxon>
        <taxon>Drosophila</taxon>
        <taxon>Sophophora</taxon>
    </lineage>
</organism>
<feature type="signal peptide" evidence="2">
    <location>
        <begin position="1"/>
        <end position="25"/>
    </location>
</feature>
<feature type="chain" id="PRO_0000247505" description="Palmitoyl-protein thioesterase 1">
    <location>
        <begin position="26"/>
        <end position="314"/>
    </location>
</feature>
<feature type="active site" description="Nucleophile" evidence="1">
    <location>
        <position position="123"/>
    </location>
</feature>
<feature type="active site" evidence="1">
    <location>
        <position position="241"/>
    </location>
</feature>
<feature type="active site" evidence="1">
    <location>
        <position position="295"/>
    </location>
</feature>
<feature type="glycosylation site" description="N-linked (GlcNAc...) asparagine" evidence="2">
    <location>
        <position position="240"/>
    </location>
</feature>
<feature type="disulfide bond" evidence="1">
    <location>
        <begin position="53"/>
        <end position="54"/>
    </location>
</feature>
<feature type="disulfide bond" evidence="1">
    <location>
        <begin position="104"/>
        <end position="136"/>
    </location>
</feature>
<feature type="disulfide bond" evidence="1">
    <location>
        <begin position="160"/>
        <end position="168"/>
    </location>
</feature>
<feature type="sequence conflict" description="In Ref. 4; AAS93752." evidence="6" ref="4">
    <original>L</original>
    <variation>W</variation>
    <location>
        <position position="85"/>
    </location>
</feature>
<feature type="sequence conflict" description="In Ref. 4; AAS93752." evidence="6" ref="4">
    <original>A</original>
    <variation>S</variation>
    <location>
        <position position="133"/>
    </location>
</feature>
<feature type="sequence conflict" description="In Ref. 4; AAS93752." evidence="6" ref="4">
    <original>D</original>
    <variation>G</variation>
    <location>
        <position position="176"/>
    </location>
</feature>
<accession>Q9W3C7</accession>
<accession>Q6NL60</accession>
<accession>Q8MT82</accession>
<comment type="function">
    <text evidence="7 8">Cleaves thioester-linked long fatty acyl groups such as palmitate from modified cysteine residues in proteins or peptides.</text>
</comment>
<comment type="catalytic activity">
    <reaction evidence="7">
        <text>S-hexadecanoyl-L-cysteinyl-[protein] + H2O = L-cysteinyl-[protein] + hexadecanoate + H(+)</text>
        <dbReference type="Rhea" id="RHEA:19233"/>
        <dbReference type="Rhea" id="RHEA-COMP:10131"/>
        <dbReference type="Rhea" id="RHEA-COMP:11032"/>
        <dbReference type="ChEBI" id="CHEBI:7896"/>
        <dbReference type="ChEBI" id="CHEBI:15377"/>
        <dbReference type="ChEBI" id="CHEBI:15378"/>
        <dbReference type="ChEBI" id="CHEBI:29950"/>
        <dbReference type="ChEBI" id="CHEBI:74151"/>
        <dbReference type="EC" id="3.1.2.22"/>
    </reaction>
    <physiologicalReaction direction="left-to-right" evidence="7">
        <dbReference type="Rhea" id="RHEA:19234"/>
    </physiologicalReaction>
</comment>
<comment type="subcellular location">
    <subcellularLocation>
        <location evidence="4">Lysosome</location>
    </subcellularLocation>
</comment>
<comment type="tissue specificity">
    <text evidence="3">Ubiquitously expressed.</text>
</comment>
<comment type="miscellaneous">
    <text>Flies deficient in Ppt1 are viable and fertile, but accumulate abnormal autofluorescent storage material in the adult central nervous system and have a shorter life span.</text>
</comment>
<comment type="similarity">
    <text evidence="6">Belongs to the palmitoyl-protein thioesterase family.</text>
</comment>
<comment type="sequence caution" evidence="6">
    <conflict type="erroneous initiation">
        <sequence resource="EMBL-CDS" id="AAM48346"/>
    </conflict>
</comment>
<protein>
    <recommendedName>
        <fullName>Palmitoyl-protein thioesterase 1</fullName>
        <shortName evidence="5">PPT-1</shortName>
        <ecNumber evidence="7">3.1.2.22</ecNumber>
    </recommendedName>
    <alternativeName>
        <fullName>Palmitoyl-protein hydrolase 1</fullName>
    </alternativeName>
</protein>
<name>PPT1_DROME</name>
<proteinExistence type="evidence at transcript level"/>